<dbReference type="EC" id="3.5.3.23" evidence="1"/>
<dbReference type="EMBL" id="CP000075">
    <property type="protein sequence ID" value="AAY38593.1"/>
    <property type="molecule type" value="Genomic_DNA"/>
</dbReference>
<dbReference type="RefSeq" id="WP_011268513.1">
    <property type="nucleotide sequence ID" value="NC_007005.1"/>
</dbReference>
<dbReference type="RefSeq" id="YP_236631.1">
    <property type="nucleotide sequence ID" value="NC_007005.1"/>
</dbReference>
<dbReference type="SMR" id="Q4ZQH9"/>
<dbReference type="STRING" id="205918.Psyr_3561"/>
<dbReference type="KEGG" id="psb:Psyr_3561"/>
<dbReference type="PATRIC" id="fig|205918.7.peg.3647"/>
<dbReference type="eggNOG" id="COG3724">
    <property type="taxonomic scope" value="Bacteria"/>
</dbReference>
<dbReference type="HOGENOM" id="CLU_053835_0_0_6"/>
<dbReference type="OrthoDB" id="248552at2"/>
<dbReference type="UniPathway" id="UPA00185">
    <property type="reaction ID" value="UER00280"/>
</dbReference>
<dbReference type="Proteomes" id="UP000000426">
    <property type="component" value="Chromosome"/>
</dbReference>
<dbReference type="GO" id="GO:0009015">
    <property type="term" value="F:N-succinylarginine dihydrolase activity"/>
    <property type="evidence" value="ECO:0007669"/>
    <property type="project" value="UniProtKB-UniRule"/>
</dbReference>
<dbReference type="GO" id="GO:0019544">
    <property type="term" value="P:arginine catabolic process to glutamate"/>
    <property type="evidence" value="ECO:0007669"/>
    <property type="project" value="UniProtKB-UniRule"/>
</dbReference>
<dbReference type="GO" id="GO:0019545">
    <property type="term" value="P:arginine catabolic process to succinate"/>
    <property type="evidence" value="ECO:0007669"/>
    <property type="project" value="UniProtKB-UniRule"/>
</dbReference>
<dbReference type="FunFam" id="3.75.10.20:FF:000001">
    <property type="entry name" value="N-succinylarginine dihydrolase"/>
    <property type="match status" value="1"/>
</dbReference>
<dbReference type="Gene3D" id="3.75.10.20">
    <property type="entry name" value="Succinylarginine dihydrolase"/>
    <property type="match status" value="1"/>
</dbReference>
<dbReference type="HAMAP" id="MF_01172">
    <property type="entry name" value="AstB"/>
    <property type="match status" value="1"/>
</dbReference>
<dbReference type="InterPro" id="IPR037031">
    <property type="entry name" value="AstB_sf"/>
</dbReference>
<dbReference type="InterPro" id="IPR007079">
    <property type="entry name" value="SuccinylArg_d-Hdrlase_AstB"/>
</dbReference>
<dbReference type="NCBIfam" id="TIGR03241">
    <property type="entry name" value="arg_catab_astB"/>
    <property type="match status" value="1"/>
</dbReference>
<dbReference type="NCBIfam" id="NF009789">
    <property type="entry name" value="PRK13281.1"/>
    <property type="match status" value="1"/>
</dbReference>
<dbReference type="PANTHER" id="PTHR30420">
    <property type="entry name" value="N-SUCCINYLARGININE DIHYDROLASE"/>
    <property type="match status" value="1"/>
</dbReference>
<dbReference type="PANTHER" id="PTHR30420:SF2">
    <property type="entry name" value="N-SUCCINYLARGININE DIHYDROLASE"/>
    <property type="match status" value="1"/>
</dbReference>
<dbReference type="Pfam" id="PF04996">
    <property type="entry name" value="AstB"/>
    <property type="match status" value="1"/>
</dbReference>
<dbReference type="SUPFAM" id="SSF55909">
    <property type="entry name" value="Pentein"/>
    <property type="match status" value="1"/>
</dbReference>
<sequence>MKSCEVNFDGLVGPTHNYGGLSYGNVASQSNSQQSANPREAALQGLAKMKALMDLGFTQGVLAPQERPDVSGLRRLGFTGSDEQVIEKAARQDMPLLVASCSASSMWVANAATVSPSADTADGRVHFTAANLNCKYHRSIEHPTTTRVLGAMFADAKHFAHHPALPAVAQFGDEGAANHTRFCRDYGEAGVEFFVFGRSAFDTRYPAPQKYPARQTLEASRAVARLHGLSEAGVVYSQQNPAVIDQGVFHNDVIAVGNGEVLFYHQDAFLNTDPMLNELRDKLGRVGGQLRAICVPRAEVSVQDAVRSYLFNSQLLSRPDGSMLLIVPQECQANASVWAYLQRLIADDSPVAEVKVFDLKQSMQNGGGPACLRLRVALNDTELAAVNPGVIMTAPLYETLTQWVDRHYRDRMSESDLADPRLLSECRTALDELTQILKLGAVYPFQLN</sequence>
<gene>
    <name evidence="1" type="primary">astB</name>
    <name type="ordered locus">Psyr_3561</name>
</gene>
<protein>
    <recommendedName>
        <fullName evidence="1">N-succinylarginine dihydrolase</fullName>
        <ecNumber evidence="1">3.5.3.23</ecNumber>
    </recommendedName>
</protein>
<proteinExistence type="inferred from homology"/>
<organism>
    <name type="scientific">Pseudomonas syringae pv. syringae (strain B728a)</name>
    <dbReference type="NCBI Taxonomy" id="205918"/>
    <lineage>
        <taxon>Bacteria</taxon>
        <taxon>Pseudomonadati</taxon>
        <taxon>Pseudomonadota</taxon>
        <taxon>Gammaproteobacteria</taxon>
        <taxon>Pseudomonadales</taxon>
        <taxon>Pseudomonadaceae</taxon>
        <taxon>Pseudomonas</taxon>
        <taxon>Pseudomonas syringae</taxon>
    </lineage>
</organism>
<reference key="1">
    <citation type="journal article" date="2005" name="Proc. Natl. Acad. Sci. U.S.A.">
        <title>Comparison of the complete genome sequences of Pseudomonas syringae pv. syringae B728a and pv. tomato DC3000.</title>
        <authorList>
            <person name="Feil H."/>
            <person name="Feil W.S."/>
            <person name="Chain P."/>
            <person name="Larimer F."/>
            <person name="Dibartolo G."/>
            <person name="Copeland A."/>
            <person name="Lykidis A."/>
            <person name="Trong S."/>
            <person name="Nolan M."/>
            <person name="Goltsman E."/>
            <person name="Thiel J."/>
            <person name="Malfatti S."/>
            <person name="Loper J.E."/>
            <person name="Lapidus A."/>
            <person name="Detter J.C."/>
            <person name="Land M."/>
            <person name="Richardson P.M."/>
            <person name="Kyrpides N.C."/>
            <person name="Ivanova N."/>
            <person name="Lindow S.E."/>
        </authorList>
    </citation>
    <scope>NUCLEOTIDE SEQUENCE [LARGE SCALE GENOMIC DNA]</scope>
    <source>
        <strain>B728a</strain>
    </source>
</reference>
<keyword id="KW-0056">Arginine metabolism</keyword>
<keyword id="KW-0378">Hydrolase</keyword>
<comment type="function">
    <text evidence="1">Catalyzes the hydrolysis of N(2)-succinylarginine into N(2)-succinylornithine, ammonia and CO(2).</text>
</comment>
<comment type="catalytic activity">
    <reaction evidence="1">
        <text>N(2)-succinyl-L-arginine + 2 H2O + 2 H(+) = N(2)-succinyl-L-ornithine + 2 NH4(+) + CO2</text>
        <dbReference type="Rhea" id="RHEA:19533"/>
        <dbReference type="ChEBI" id="CHEBI:15377"/>
        <dbReference type="ChEBI" id="CHEBI:15378"/>
        <dbReference type="ChEBI" id="CHEBI:16526"/>
        <dbReference type="ChEBI" id="CHEBI:28938"/>
        <dbReference type="ChEBI" id="CHEBI:58241"/>
        <dbReference type="ChEBI" id="CHEBI:58514"/>
        <dbReference type="EC" id="3.5.3.23"/>
    </reaction>
</comment>
<comment type="pathway">
    <text evidence="1">Amino-acid degradation; L-arginine degradation via AST pathway; L-glutamate and succinate from L-arginine: step 2/5.</text>
</comment>
<comment type="subunit">
    <text evidence="1">Homodimer.</text>
</comment>
<comment type="similarity">
    <text evidence="1">Belongs to the succinylarginine dihydrolase family.</text>
</comment>
<name>ASTB_PSEU2</name>
<accession>Q4ZQH9</accession>
<feature type="chain" id="PRO_0000262369" description="N-succinylarginine dihydrolase">
    <location>
        <begin position="1"/>
        <end position="448"/>
    </location>
</feature>
<feature type="active site" evidence="1">
    <location>
        <position position="174"/>
    </location>
</feature>
<feature type="active site" evidence="1">
    <location>
        <position position="250"/>
    </location>
</feature>
<feature type="active site" description="Nucleophile" evidence="1">
    <location>
        <position position="371"/>
    </location>
</feature>
<feature type="binding site" evidence="1">
    <location>
        <begin position="19"/>
        <end position="28"/>
    </location>
    <ligand>
        <name>substrate</name>
    </ligand>
</feature>
<feature type="binding site" evidence="1">
    <location>
        <position position="110"/>
    </location>
    <ligand>
        <name>substrate</name>
    </ligand>
</feature>
<feature type="binding site" evidence="1">
    <location>
        <begin position="137"/>
        <end position="138"/>
    </location>
    <ligand>
        <name>substrate</name>
    </ligand>
</feature>
<feature type="binding site" evidence="1">
    <location>
        <position position="214"/>
    </location>
    <ligand>
        <name>substrate</name>
    </ligand>
</feature>
<feature type="binding site" evidence="1">
    <location>
        <position position="252"/>
    </location>
    <ligand>
        <name>substrate</name>
    </ligand>
</feature>
<feature type="binding site" evidence="1">
    <location>
        <position position="365"/>
    </location>
    <ligand>
        <name>substrate</name>
    </ligand>
</feature>
<evidence type="ECO:0000255" key="1">
    <source>
        <dbReference type="HAMAP-Rule" id="MF_01172"/>
    </source>
</evidence>